<gene>
    <name evidence="1" type="primary">rpsM</name>
    <name type="ordered locus">BURPS1710b_3753</name>
</gene>
<reference key="1">
    <citation type="journal article" date="2010" name="Genome Biol. Evol.">
        <title>Continuing evolution of Burkholderia mallei through genome reduction and large-scale rearrangements.</title>
        <authorList>
            <person name="Losada L."/>
            <person name="Ronning C.M."/>
            <person name="DeShazer D."/>
            <person name="Woods D."/>
            <person name="Fedorova N."/>
            <person name="Kim H.S."/>
            <person name="Shabalina S.A."/>
            <person name="Pearson T.R."/>
            <person name="Brinkac L."/>
            <person name="Tan P."/>
            <person name="Nandi T."/>
            <person name="Crabtree J."/>
            <person name="Badger J."/>
            <person name="Beckstrom-Sternberg S."/>
            <person name="Saqib M."/>
            <person name="Schutzer S.E."/>
            <person name="Keim P."/>
            <person name="Nierman W.C."/>
        </authorList>
    </citation>
    <scope>NUCLEOTIDE SEQUENCE [LARGE SCALE GENOMIC DNA]</scope>
    <source>
        <strain>1710b</strain>
    </source>
</reference>
<dbReference type="EMBL" id="CP000124">
    <property type="protein sequence ID" value="ABA47622.1"/>
    <property type="molecule type" value="Genomic_DNA"/>
</dbReference>
<dbReference type="RefSeq" id="WP_004197938.1">
    <property type="nucleotide sequence ID" value="NC_007434.1"/>
</dbReference>
<dbReference type="SMR" id="Q3JMT6"/>
<dbReference type="EnsemblBacteria" id="ABA47622">
    <property type="protein sequence ID" value="ABA47622"/>
    <property type="gene ID" value="BURPS1710b_3753"/>
</dbReference>
<dbReference type="GeneID" id="93061809"/>
<dbReference type="KEGG" id="bpm:BURPS1710b_3753"/>
<dbReference type="HOGENOM" id="CLU_103849_1_2_4"/>
<dbReference type="Proteomes" id="UP000002700">
    <property type="component" value="Chromosome I"/>
</dbReference>
<dbReference type="GO" id="GO:0005829">
    <property type="term" value="C:cytosol"/>
    <property type="evidence" value="ECO:0007669"/>
    <property type="project" value="TreeGrafter"/>
</dbReference>
<dbReference type="GO" id="GO:0015935">
    <property type="term" value="C:small ribosomal subunit"/>
    <property type="evidence" value="ECO:0007669"/>
    <property type="project" value="TreeGrafter"/>
</dbReference>
<dbReference type="GO" id="GO:0019843">
    <property type="term" value="F:rRNA binding"/>
    <property type="evidence" value="ECO:0007669"/>
    <property type="project" value="UniProtKB-UniRule"/>
</dbReference>
<dbReference type="GO" id="GO:0003735">
    <property type="term" value="F:structural constituent of ribosome"/>
    <property type="evidence" value="ECO:0007669"/>
    <property type="project" value="InterPro"/>
</dbReference>
<dbReference type="GO" id="GO:0000049">
    <property type="term" value="F:tRNA binding"/>
    <property type="evidence" value="ECO:0007669"/>
    <property type="project" value="UniProtKB-UniRule"/>
</dbReference>
<dbReference type="GO" id="GO:0006412">
    <property type="term" value="P:translation"/>
    <property type="evidence" value="ECO:0007669"/>
    <property type="project" value="UniProtKB-UniRule"/>
</dbReference>
<dbReference type="FunFam" id="1.10.8.50:FF:000001">
    <property type="entry name" value="30S ribosomal protein S13"/>
    <property type="match status" value="1"/>
</dbReference>
<dbReference type="FunFam" id="4.10.910.10:FF:000001">
    <property type="entry name" value="30S ribosomal protein S13"/>
    <property type="match status" value="1"/>
</dbReference>
<dbReference type="Gene3D" id="1.10.8.50">
    <property type="match status" value="1"/>
</dbReference>
<dbReference type="Gene3D" id="4.10.910.10">
    <property type="entry name" value="30s ribosomal protein s13, domain 2"/>
    <property type="match status" value="1"/>
</dbReference>
<dbReference type="HAMAP" id="MF_01315">
    <property type="entry name" value="Ribosomal_uS13"/>
    <property type="match status" value="1"/>
</dbReference>
<dbReference type="InterPro" id="IPR027437">
    <property type="entry name" value="Rbsml_uS13_C"/>
</dbReference>
<dbReference type="InterPro" id="IPR001892">
    <property type="entry name" value="Ribosomal_uS13"/>
</dbReference>
<dbReference type="InterPro" id="IPR010979">
    <property type="entry name" value="Ribosomal_uS13-like_H2TH"/>
</dbReference>
<dbReference type="InterPro" id="IPR019980">
    <property type="entry name" value="Ribosomal_uS13_bac-type"/>
</dbReference>
<dbReference type="InterPro" id="IPR018269">
    <property type="entry name" value="Ribosomal_uS13_CS"/>
</dbReference>
<dbReference type="NCBIfam" id="TIGR03631">
    <property type="entry name" value="uS13_bact"/>
    <property type="match status" value="1"/>
</dbReference>
<dbReference type="PANTHER" id="PTHR10871">
    <property type="entry name" value="30S RIBOSOMAL PROTEIN S13/40S RIBOSOMAL PROTEIN S18"/>
    <property type="match status" value="1"/>
</dbReference>
<dbReference type="PANTHER" id="PTHR10871:SF1">
    <property type="entry name" value="SMALL RIBOSOMAL SUBUNIT PROTEIN US13M"/>
    <property type="match status" value="1"/>
</dbReference>
<dbReference type="Pfam" id="PF00416">
    <property type="entry name" value="Ribosomal_S13"/>
    <property type="match status" value="1"/>
</dbReference>
<dbReference type="PIRSF" id="PIRSF002134">
    <property type="entry name" value="Ribosomal_S13"/>
    <property type="match status" value="1"/>
</dbReference>
<dbReference type="SUPFAM" id="SSF46946">
    <property type="entry name" value="S13-like H2TH domain"/>
    <property type="match status" value="1"/>
</dbReference>
<dbReference type="PROSITE" id="PS00646">
    <property type="entry name" value="RIBOSOMAL_S13_1"/>
    <property type="match status" value="1"/>
</dbReference>
<dbReference type="PROSITE" id="PS50159">
    <property type="entry name" value="RIBOSOMAL_S13_2"/>
    <property type="match status" value="1"/>
</dbReference>
<keyword id="KW-0687">Ribonucleoprotein</keyword>
<keyword id="KW-0689">Ribosomal protein</keyword>
<keyword id="KW-0694">RNA-binding</keyword>
<keyword id="KW-0699">rRNA-binding</keyword>
<keyword id="KW-0820">tRNA-binding</keyword>
<protein>
    <recommendedName>
        <fullName evidence="1">Small ribosomal subunit protein uS13</fullName>
    </recommendedName>
    <alternativeName>
        <fullName evidence="3">30S ribosomal protein S13</fullName>
    </alternativeName>
</protein>
<organism>
    <name type="scientific">Burkholderia pseudomallei (strain 1710b)</name>
    <dbReference type="NCBI Taxonomy" id="320372"/>
    <lineage>
        <taxon>Bacteria</taxon>
        <taxon>Pseudomonadati</taxon>
        <taxon>Pseudomonadota</taxon>
        <taxon>Betaproteobacteria</taxon>
        <taxon>Burkholderiales</taxon>
        <taxon>Burkholderiaceae</taxon>
        <taxon>Burkholderia</taxon>
        <taxon>pseudomallei group</taxon>
    </lineage>
</organism>
<evidence type="ECO:0000255" key="1">
    <source>
        <dbReference type="HAMAP-Rule" id="MF_01315"/>
    </source>
</evidence>
<evidence type="ECO:0000256" key="2">
    <source>
        <dbReference type="SAM" id="MobiDB-lite"/>
    </source>
</evidence>
<evidence type="ECO:0000305" key="3"/>
<feature type="chain" id="PRO_0000230486" description="Small ribosomal subunit protein uS13">
    <location>
        <begin position="1"/>
        <end position="121"/>
    </location>
</feature>
<feature type="region of interest" description="Disordered" evidence="2">
    <location>
        <begin position="94"/>
        <end position="121"/>
    </location>
</feature>
<accession>Q3JMT6</accession>
<proteinExistence type="inferred from homology"/>
<name>RS13_BURP1</name>
<comment type="function">
    <text evidence="1">Located at the top of the head of the 30S subunit, it contacts several helices of the 16S rRNA. In the 70S ribosome it contacts the 23S rRNA (bridge B1a) and protein L5 of the 50S subunit (bridge B1b), connecting the 2 subunits; these bridges are implicated in subunit movement. Contacts the tRNAs in the A and P-sites.</text>
</comment>
<comment type="subunit">
    <text evidence="1">Part of the 30S ribosomal subunit. Forms a loose heterodimer with protein S19. Forms two bridges to the 50S subunit in the 70S ribosome.</text>
</comment>
<comment type="similarity">
    <text evidence="1">Belongs to the universal ribosomal protein uS13 family.</text>
</comment>
<sequence length="121" mass="13562">MARIAGVNIPNHQHTEIGLTAIFGIGRTRARSICVASGVAFSKKVKDLTDADLEKLREEVGKFVVEGDLRREVTMNIKRLMDLGCYRGVRHRKGLPLRGQRTRTNARTRKGPRRAAQALKK</sequence>